<gene>
    <name evidence="1" type="primary">ruvA</name>
    <name type="ordered locus">Dtpsy_0493</name>
</gene>
<dbReference type="EMBL" id="CP001392">
    <property type="protein sequence ID" value="ACM31975.1"/>
    <property type="molecule type" value="Genomic_DNA"/>
</dbReference>
<dbReference type="RefSeq" id="WP_012655527.1">
    <property type="nucleotide sequence ID" value="NC_011992.1"/>
</dbReference>
<dbReference type="SMR" id="B9MCH5"/>
<dbReference type="KEGG" id="dia:Dtpsy_0493"/>
<dbReference type="eggNOG" id="COG0632">
    <property type="taxonomic scope" value="Bacteria"/>
</dbReference>
<dbReference type="HOGENOM" id="CLU_087936_0_0_4"/>
<dbReference type="Proteomes" id="UP000000450">
    <property type="component" value="Chromosome"/>
</dbReference>
<dbReference type="GO" id="GO:0005737">
    <property type="term" value="C:cytoplasm"/>
    <property type="evidence" value="ECO:0007669"/>
    <property type="project" value="UniProtKB-SubCell"/>
</dbReference>
<dbReference type="GO" id="GO:0009379">
    <property type="term" value="C:Holliday junction helicase complex"/>
    <property type="evidence" value="ECO:0007669"/>
    <property type="project" value="InterPro"/>
</dbReference>
<dbReference type="GO" id="GO:0048476">
    <property type="term" value="C:Holliday junction resolvase complex"/>
    <property type="evidence" value="ECO:0007669"/>
    <property type="project" value="UniProtKB-UniRule"/>
</dbReference>
<dbReference type="GO" id="GO:0005524">
    <property type="term" value="F:ATP binding"/>
    <property type="evidence" value="ECO:0007669"/>
    <property type="project" value="InterPro"/>
</dbReference>
<dbReference type="GO" id="GO:0000400">
    <property type="term" value="F:four-way junction DNA binding"/>
    <property type="evidence" value="ECO:0007669"/>
    <property type="project" value="UniProtKB-UniRule"/>
</dbReference>
<dbReference type="GO" id="GO:0009378">
    <property type="term" value="F:four-way junction helicase activity"/>
    <property type="evidence" value="ECO:0007669"/>
    <property type="project" value="InterPro"/>
</dbReference>
<dbReference type="GO" id="GO:0006310">
    <property type="term" value="P:DNA recombination"/>
    <property type="evidence" value="ECO:0007669"/>
    <property type="project" value="UniProtKB-UniRule"/>
</dbReference>
<dbReference type="GO" id="GO:0006281">
    <property type="term" value="P:DNA repair"/>
    <property type="evidence" value="ECO:0007669"/>
    <property type="project" value="UniProtKB-UniRule"/>
</dbReference>
<dbReference type="CDD" id="cd14332">
    <property type="entry name" value="UBA_RuvA_C"/>
    <property type="match status" value="1"/>
</dbReference>
<dbReference type="Gene3D" id="1.10.150.20">
    <property type="entry name" value="5' to 3' exonuclease, C-terminal subdomain"/>
    <property type="match status" value="1"/>
</dbReference>
<dbReference type="Gene3D" id="1.10.8.10">
    <property type="entry name" value="DNA helicase RuvA subunit, C-terminal domain"/>
    <property type="match status" value="1"/>
</dbReference>
<dbReference type="Gene3D" id="2.40.50.140">
    <property type="entry name" value="Nucleic acid-binding proteins"/>
    <property type="match status" value="1"/>
</dbReference>
<dbReference type="HAMAP" id="MF_00031">
    <property type="entry name" value="DNA_HJ_migration_RuvA"/>
    <property type="match status" value="1"/>
</dbReference>
<dbReference type="InterPro" id="IPR013849">
    <property type="entry name" value="DNA_helicase_Holl-junc_RuvA_I"/>
</dbReference>
<dbReference type="InterPro" id="IPR003583">
    <property type="entry name" value="Hlx-hairpin-Hlx_DNA-bd_motif"/>
</dbReference>
<dbReference type="InterPro" id="IPR012340">
    <property type="entry name" value="NA-bd_OB-fold"/>
</dbReference>
<dbReference type="InterPro" id="IPR000085">
    <property type="entry name" value="RuvA"/>
</dbReference>
<dbReference type="InterPro" id="IPR010994">
    <property type="entry name" value="RuvA_2-like"/>
</dbReference>
<dbReference type="InterPro" id="IPR011114">
    <property type="entry name" value="RuvA_C"/>
</dbReference>
<dbReference type="InterPro" id="IPR036267">
    <property type="entry name" value="RuvA_C_sf"/>
</dbReference>
<dbReference type="NCBIfam" id="TIGR00084">
    <property type="entry name" value="ruvA"/>
    <property type="match status" value="1"/>
</dbReference>
<dbReference type="Pfam" id="PF14520">
    <property type="entry name" value="HHH_5"/>
    <property type="match status" value="1"/>
</dbReference>
<dbReference type="Pfam" id="PF07499">
    <property type="entry name" value="RuvA_C"/>
    <property type="match status" value="1"/>
</dbReference>
<dbReference type="Pfam" id="PF01330">
    <property type="entry name" value="RuvA_N"/>
    <property type="match status" value="1"/>
</dbReference>
<dbReference type="SMART" id="SM00278">
    <property type="entry name" value="HhH1"/>
    <property type="match status" value="2"/>
</dbReference>
<dbReference type="SUPFAM" id="SSF46929">
    <property type="entry name" value="DNA helicase RuvA subunit, C-terminal domain"/>
    <property type="match status" value="1"/>
</dbReference>
<dbReference type="SUPFAM" id="SSF50249">
    <property type="entry name" value="Nucleic acid-binding proteins"/>
    <property type="match status" value="1"/>
</dbReference>
<dbReference type="SUPFAM" id="SSF47781">
    <property type="entry name" value="RuvA domain 2-like"/>
    <property type="match status" value="1"/>
</dbReference>
<name>RUVA_ACIET</name>
<sequence>MIGKLTGTLLEKNPPEVLVDCHGVGYEVLVSMSTFYNLPAVGERVSLLTQFIVREDAQLLYGFGTAQERQAFRELIKISGVGPRTALSILSGMGVADLAQAVSLQEAGRLVKVPGIGKKTAERLLLELKGKLGADVGVRAHAANDNQADILQALLALGYNDKEAAAALKALPADVGVSEGIKLALKSLSK</sequence>
<protein>
    <recommendedName>
        <fullName evidence="1">Holliday junction branch migration complex subunit RuvA</fullName>
    </recommendedName>
</protein>
<proteinExistence type="inferred from homology"/>
<feature type="chain" id="PRO_1000195137" description="Holliday junction branch migration complex subunit RuvA">
    <location>
        <begin position="1"/>
        <end position="190"/>
    </location>
</feature>
<feature type="region of interest" description="Domain I" evidence="1">
    <location>
        <begin position="1"/>
        <end position="64"/>
    </location>
</feature>
<feature type="region of interest" description="Domain II" evidence="1">
    <location>
        <begin position="65"/>
        <end position="137"/>
    </location>
</feature>
<feature type="region of interest" description="Flexible linker" evidence="1">
    <location>
        <begin position="137"/>
        <end position="141"/>
    </location>
</feature>
<feature type="region of interest" description="Domain III" evidence="1">
    <location>
        <begin position="142"/>
        <end position="190"/>
    </location>
</feature>
<keyword id="KW-0963">Cytoplasm</keyword>
<keyword id="KW-0227">DNA damage</keyword>
<keyword id="KW-0233">DNA recombination</keyword>
<keyword id="KW-0234">DNA repair</keyword>
<keyword id="KW-0238">DNA-binding</keyword>
<keyword id="KW-1185">Reference proteome</keyword>
<comment type="function">
    <text evidence="1">The RuvA-RuvB-RuvC complex processes Holliday junction (HJ) DNA during genetic recombination and DNA repair, while the RuvA-RuvB complex plays an important role in the rescue of blocked DNA replication forks via replication fork reversal (RFR). RuvA specifically binds to HJ cruciform DNA, conferring on it an open structure. The RuvB hexamer acts as an ATP-dependent pump, pulling dsDNA into and through the RuvAB complex. HJ branch migration allows RuvC to scan DNA until it finds its consensus sequence, where it cleaves and resolves the cruciform DNA.</text>
</comment>
<comment type="subunit">
    <text evidence="1">Homotetramer. Forms an RuvA(8)-RuvB(12)-Holliday junction (HJ) complex. HJ DNA is sandwiched between 2 RuvA tetramers; dsDNA enters through RuvA and exits via RuvB. An RuvB hexamer assembles on each DNA strand where it exits the tetramer. Each RuvB hexamer is contacted by two RuvA subunits (via domain III) on 2 adjacent RuvB subunits; this complex drives branch migration. In the full resolvosome a probable DNA-RuvA(4)-RuvB(12)-RuvC(2) complex forms which resolves the HJ.</text>
</comment>
<comment type="subcellular location">
    <subcellularLocation>
        <location evidence="1">Cytoplasm</location>
    </subcellularLocation>
</comment>
<comment type="domain">
    <text evidence="1">Has three domains with a flexible linker between the domains II and III and assumes an 'L' shape. Domain III is highly mobile and contacts RuvB.</text>
</comment>
<comment type="similarity">
    <text evidence="1">Belongs to the RuvA family.</text>
</comment>
<evidence type="ECO:0000255" key="1">
    <source>
        <dbReference type="HAMAP-Rule" id="MF_00031"/>
    </source>
</evidence>
<accession>B9MCH5</accession>
<reference key="1">
    <citation type="submission" date="2009-01" db="EMBL/GenBank/DDBJ databases">
        <title>Complete sequence of Diaphorobacter sp. TPSY.</title>
        <authorList>
            <consortium name="US DOE Joint Genome Institute"/>
            <person name="Lucas S."/>
            <person name="Copeland A."/>
            <person name="Lapidus A."/>
            <person name="Glavina del Rio T."/>
            <person name="Tice H."/>
            <person name="Bruce D."/>
            <person name="Goodwin L."/>
            <person name="Pitluck S."/>
            <person name="Chertkov O."/>
            <person name="Brettin T."/>
            <person name="Detter J.C."/>
            <person name="Han C."/>
            <person name="Larimer F."/>
            <person name="Land M."/>
            <person name="Hauser L."/>
            <person name="Kyrpides N."/>
            <person name="Mikhailova N."/>
            <person name="Coates J.D."/>
        </authorList>
    </citation>
    <scope>NUCLEOTIDE SEQUENCE [LARGE SCALE GENOMIC DNA]</scope>
    <source>
        <strain>TPSY</strain>
    </source>
</reference>
<organism>
    <name type="scientific">Acidovorax ebreus (strain TPSY)</name>
    <name type="common">Diaphorobacter sp. (strain TPSY)</name>
    <dbReference type="NCBI Taxonomy" id="535289"/>
    <lineage>
        <taxon>Bacteria</taxon>
        <taxon>Pseudomonadati</taxon>
        <taxon>Pseudomonadota</taxon>
        <taxon>Betaproteobacteria</taxon>
        <taxon>Burkholderiales</taxon>
        <taxon>Comamonadaceae</taxon>
        <taxon>Diaphorobacter</taxon>
    </lineage>
</organism>